<accession>Q43785</accession>
<dbReference type="EC" id="6.3.1.2"/>
<dbReference type="EMBL" id="U15591">
    <property type="protein sequence ID" value="AAB41554.1"/>
    <property type="molecule type" value="mRNA"/>
</dbReference>
<dbReference type="SMR" id="Q43785"/>
<dbReference type="GO" id="GO:0005737">
    <property type="term" value="C:cytoplasm"/>
    <property type="evidence" value="ECO:0007669"/>
    <property type="project" value="UniProtKB-SubCell"/>
</dbReference>
<dbReference type="GO" id="GO:0005524">
    <property type="term" value="F:ATP binding"/>
    <property type="evidence" value="ECO:0007669"/>
    <property type="project" value="UniProtKB-KW"/>
</dbReference>
<dbReference type="GO" id="GO:0004356">
    <property type="term" value="F:glutamine synthetase activity"/>
    <property type="evidence" value="ECO:0007669"/>
    <property type="project" value="UniProtKB-EC"/>
</dbReference>
<dbReference type="GO" id="GO:0006542">
    <property type="term" value="P:glutamine biosynthetic process"/>
    <property type="evidence" value="ECO:0007669"/>
    <property type="project" value="InterPro"/>
</dbReference>
<dbReference type="FunFam" id="3.30.590.10:FF:000004">
    <property type="entry name" value="Glutamine synthetase"/>
    <property type="match status" value="1"/>
</dbReference>
<dbReference type="FunFam" id="3.10.20.70:FF:000003">
    <property type="entry name" value="Glutamine synthetase, chloroplastic"/>
    <property type="match status" value="1"/>
</dbReference>
<dbReference type="Gene3D" id="3.10.20.70">
    <property type="entry name" value="Glutamine synthetase, N-terminal domain"/>
    <property type="match status" value="1"/>
</dbReference>
<dbReference type="Gene3D" id="3.30.590.10">
    <property type="entry name" value="Glutamine synthetase/guanido kinase, catalytic domain"/>
    <property type="match status" value="1"/>
</dbReference>
<dbReference type="InterPro" id="IPR008147">
    <property type="entry name" value="Gln_synt_N"/>
</dbReference>
<dbReference type="InterPro" id="IPR036651">
    <property type="entry name" value="Gln_synt_N_sf"/>
</dbReference>
<dbReference type="InterPro" id="IPR014746">
    <property type="entry name" value="Gln_synth/guanido_kin_cat_dom"/>
</dbReference>
<dbReference type="InterPro" id="IPR008146">
    <property type="entry name" value="Gln_synth_cat_dom"/>
</dbReference>
<dbReference type="InterPro" id="IPR027303">
    <property type="entry name" value="Gln_synth_gly_rich_site"/>
</dbReference>
<dbReference type="InterPro" id="IPR027302">
    <property type="entry name" value="Gln_synth_N_conserv_site"/>
</dbReference>
<dbReference type="InterPro" id="IPR050292">
    <property type="entry name" value="Glutamine_Synthetase"/>
</dbReference>
<dbReference type="PANTHER" id="PTHR20852">
    <property type="entry name" value="GLUTAMINE SYNTHETASE"/>
    <property type="match status" value="1"/>
</dbReference>
<dbReference type="PANTHER" id="PTHR20852:SF110">
    <property type="entry name" value="GLUTAMINE SYNTHETASE"/>
    <property type="match status" value="1"/>
</dbReference>
<dbReference type="Pfam" id="PF00120">
    <property type="entry name" value="Gln-synt_C"/>
    <property type="match status" value="1"/>
</dbReference>
<dbReference type="Pfam" id="PF03951">
    <property type="entry name" value="Gln-synt_N"/>
    <property type="match status" value="1"/>
</dbReference>
<dbReference type="SMART" id="SM01230">
    <property type="entry name" value="Gln-synt_C"/>
    <property type="match status" value="1"/>
</dbReference>
<dbReference type="SUPFAM" id="SSF54368">
    <property type="entry name" value="Glutamine synthetase, N-terminal domain"/>
    <property type="match status" value="1"/>
</dbReference>
<dbReference type="SUPFAM" id="SSF55931">
    <property type="entry name" value="Glutamine synthetase/guanido kinase"/>
    <property type="match status" value="1"/>
</dbReference>
<dbReference type="PROSITE" id="PS00180">
    <property type="entry name" value="GLNA_1"/>
    <property type="match status" value="1"/>
</dbReference>
<dbReference type="PROSITE" id="PS00181">
    <property type="entry name" value="GLNA_ATP"/>
    <property type="match status" value="1"/>
</dbReference>
<dbReference type="PROSITE" id="PS51986">
    <property type="entry name" value="GS_BETA_GRASP"/>
    <property type="match status" value="1"/>
</dbReference>
<dbReference type="PROSITE" id="PS51987">
    <property type="entry name" value="GS_CATALYTIC"/>
    <property type="match status" value="1"/>
</dbReference>
<comment type="catalytic activity">
    <reaction>
        <text>L-glutamate + NH4(+) + ATP = L-glutamine + ADP + phosphate + H(+)</text>
        <dbReference type="Rhea" id="RHEA:16169"/>
        <dbReference type="ChEBI" id="CHEBI:15378"/>
        <dbReference type="ChEBI" id="CHEBI:28938"/>
        <dbReference type="ChEBI" id="CHEBI:29985"/>
        <dbReference type="ChEBI" id="CHEBI:30616"/>
        <dbReference type="ChEBI" id="CHEBI:43474"/>
        <dbReference type="ChEBI" id="CHEBI:58359"/>
        <dbReference type="ChEBI" id="CHEBI:456216"/>
        <dbReference type="EC" id="6.3.1.2"/>
    </reaction>
</comment>
<comment type="subunit">
    <text evidence="1">Homooctamer.</text>
</comment>
<comment type="subcellular location">
    <subcellularLocation>
        <location>Cytoplasm</location>
    </subcellularLocation>
</comment>
<comment type="tissue specificity">
    <text>Found at highest levels in root nodules.</text>
</comment>
<comment type="similarity">
    <text evidence="4">Belongs to the glutamine synthetase family.</text>
</comment>
<proteinExistence type="evidence at transcript level"/>
<protein>
    <recommendedName>
        <fullName>Glutamine synthetase nodule isozyme</fullName>
        <ecNumber>6.3.1.2</ecNumber>
    </recommendedName>
    <alternativeName>
        <fullName>Glutamate--ammonia ligase</fullName>
    </alternativeName>
</protein>
<name>GLNA3_MEDSA</name>
<gene>
    <name type="primary">GS1</name>
</gene>
<feature type="chain" id="PRO_0000153184" description="Glutamine synthetase nodule isozyme">
    <location>
        <begin position="1"/>
        <end position="356"/>
    </location>
</feature>
<feature type="domain" description="GS beta-grasp" evidence="2">
    <location>
        <begin position="19"/>
        <end position="99"/>
    </location>
</feature>
<feature type="domain" description="GS catalytic" evidence="3">
    <location>
        <begin position="106"/>
        <end position="356"/>
    </location>
</feature>
<reference key="1">
    <citation type="journal article" date="1995" name="Mol. Plant Microbe Interact.">
        <title>Characterization of a nodule-enhanced glutamine synthetase from alfalfa: nucleotide sequence, in situ localization, and transcript analysis.</title>
        <authorList>
            <person name="Temple S.J."/>
            <person name="Heard J."/>
            <person name="Ganter G."/>
            <person name="Dunn K."/>
            <person name="Sengupta-Gopalan C."/>
        </authorList>
    </citation>
    <scope>NUCLEOTIDE SEQUENCE [MRNA]</scope>
    <source>
        <strain>cv. Iroquois</strain>
        <tissue>Root nodule</tissue>
    </source>
</reference>
<reference key="2">
    <citation type="journal article" date="1988" name="Mol. Plant Microbe Interact.">
        <title>Developmental regulation of nodule-specific genes in alfalfa root nodules.</title>
        <authorList>
            <person name="Dunn K."/>
            <person name="Dickstein R."/>
            <person name="Feinbaum R."/>
            <person name="Burnett B.K."/>
            <person name="Peterman T.K."/>
            <person name="Thoidis G."/>
            <person name="Goodman H.M."/>
            <person name="Ausubel F.M."/>
        </authorList>
    </citation>
    <scope>PARTIAL NUCLEOTIDE SEQUENCE</scope>
    <source>
        <strain>cv. Iroquois</strain>
        <tissue>Root nodule</tissue>
    </source>
</reference>
<evidence type="ECO:0000250" key="1"/>
<evidence type="ECO:0000255" key="2">
    <source>
        <dbReference type="PROSITE-ProRule" id="PRU01330"/>
    </source>
</evidence>
<evidence type="ECO:0000255" key="3">
    <source>
        <dbReference type="PROSITE-ProRule" id="PRU01331"/>
    </source>
</evidence>
<evidence type="ECO:0000305" key="4"/>
<sequence>MSLLSDLINLNLSESSEKIIAEYIWVGGSGMDLRSKARTLPGPVSDPAKLPKWNYDGSSTNQAPGQDSEVILYPQAIFKDPFRQGNNILVICDVYTPAGEPLPTNKRHNAAKIFSHPDVAAEVPWYGIEQEYTLLQKDTNWPLGWPIGGFPGPQGPYYCGIGADKAYGRDIVDAHYKACLYAGINISGINGEVMPGQWEFQVGPSVGISAGDEIWAARYILERITEIAGVVVSFDPKPIPGDWNGAGAHTNYSTKSMREDGGYEIIKKAIEKLGLRHKEHIAAYGEGNERRLTGKHETTDINTFSWGVANRGASVRVGRDTEKDGKGYFEDRRPSSNMDPYVVTSMIAETTLLWKP</sequence>
<keyword id="KW-0067">ATP-binding</keyword>
<keyword id="KW-0963">Cytoplasm</keyword>
<keyword id="KW-0436">Ligase</keyword>
<keyword id="KW-0535">Nitrogen fixation</keyword>
<keyword id="KW-0547">Nucleotide-binding</keyword>
<organism>
    <name type="scientific">Medicago sativa</name>
    <name type="common">Alfalfa</name>
    <dbReference type="NCBI Taxonomy" id="3879"/>
    <lineage>
        <taxon>Eukaryota</taxon>
        <taxon>Viridiplantae</taxon>
        <taxon>Streptophyta</taxon>
        <taxon>Embryophyta</taxon>
        <taxon>Tracheophyta</taxon>
        <taxon>Spermatophyta</taxon>
        <taxon>Magnoliopsida</taxon>
        <taxon>eudicotyledons</taxon>
        <taxon>Gunneridae</taxon>
        <taxon>Pentapetalae</taxon>
        <taxon>rosids</taxon>
        <taxon>fabids</taxon>
        <taxon>Fabales</taxon>
        <taxon>Fabaceae</taxon>
        <taxon>Papilionoideae</taxon>
        <taxon>50 kb inversion clade</taxon>
        <taxon>NPAAA clade</taxon>
        <taxon>Hologalegina</taxon>
        <taxon>IRL clade</taxon>
        <taxon>Trifolieae</taxon>
        <taxon>Medicago</taxon>
    </lineage>
</organism>